<name>PER3_CAPAN</name>
<organism>
    <name type="scientific">Capsicum annuum</name>
    <name type="common">Capsicum pepper</name>
    <dbReference type="NCBI Taxonomy" id="4072"/>
    <lineage>
        <taxon>Eukaryota</taxon>
        <taxon>Viridiplantae</taxon>
        <taxon>Streptophyta</taxon>
        <taxon>Embryophyta</taxon>
        <taxon>Tracheophyta</taxon>
        <taxon>Spermatophyta</taxon>
        <taxon>Magnoliopsida</taxon>
        <taxon>eudicotyledons</taxon>
        <taxon>Gunneridae</taxon>
        <taxon>Pentapetalae</taxon>
        <taxon>asterids</taxon>
        <taxon>lamiids</taxon>
        <taxon>Solanales</taxon>
        <taxon>Solanaceae</taxon>
        <taxon>Solanoideae</taxon>
        <taxon>Capsiceae</taxon>
        <taxon>Capsicum</taxon>
    </lineage>
</organism>
<keyword id="KW-0106">Calcium</keyword>
<keyword id="KW-0903">Direct protein sequencing</keyword>
<keyword id="KW-0349">Heme</keyword>
<keyword id="KW-0376">Hydrogen peroxide</keyword>
<keyword id="KW-0408">Iron</keyword>
<keyword id="KW-0479">Metal-binding</keyword>
<keyword id="KW-0560">Oxidoreductase</keyword>
<keyword id="KW-0575">Peroxidase</keyword>
<keyword id="KW-0964">Secreted</keyword>
<sequence length="45" mass="5041">GFEVIDNIKDSVVILGGPNWNVKMGDIRPLTGSNGEIRFDNNYFK</sequence>
<reference evidence="4" key="1">
    <citation type="submission" date="2008-07" db="UniProtKB">
        <authorList>
            <person name="Sabater Jara A.B."/>
            <person name="Almagro L."/>
            <person name="Pedreno M.A."/>
        </authorList>
    </citation>
    <scope>PROTEIN SEQUENCE</scope>
</reference>
<evidence type="ECO:0000250" key="1">
    <source>
        <dbReference type="UniProtKB" id="P84516"/>
    </source>
</evidence>
<evidence type="ECO:0000250" key="2">
    <source>
        <dbReference type="UniProtKB" id="Q42578"/>
    </source>
</evidence>
<evidence type="ECO:0000255" key="3">
    <source>
        <dbReference type="PROSITE-ProRule" id="PRU00297"/>
    </source>
</evidence>
<evidence type="ECO:0000305" key="4"/>
<protein>
    <recommendedName>
        <fullName evidence="2">Peroxidase 3</fullName>
        <ecNumber>1.11.1.7</ecNumber>
    </recommendedName>
</protein>
<dbReference type="EC" id="1.11.1.7"/>
<dbReference type="GO" id="GO:0005576">
    <property type="term" value="C:extracellular region"/>
    <property type="evidence" value="ECO:0007669"/>
    <property type="project" value="UniProtKB-SubCell"/>
</dbReference>
<dbReference type="GO" id="GO:0140825">
    <property type="term" value="F:lactoperoxidase activity"/>
    <property type="evidence" value="ECO:0007669"/>
    <property type="project" value="UniProtKB-EC"/>
</dbReference>
<dbReference type="GO" id="GO:0046872">
    <property type="term" value="F:metal ion binding"/>
    <property type="evidence" value="ECO:0007669"/>
    <property type="project" value="UniProtKB-KW"/>
</dbReference>
<dbReference type="GO" id="GO:0042744">
    <property type="term" value="P:hydrogen peroxide catabolic process"/>
    <property type="evidence" value="ECO:0007669"/>
    <property type="project" value="UniProtKB-KW"/>
</dbReference>
<proteinExistence type="evidence at protein level"/>
<comment type="function">
    <text evidence="4">Removal of H(2)O(2), oxidation of toxic reductants, biosynthesis and degradation of lignin, suberization, auxin catabolism, response to environmental stresses such as wounding, pathogen attack and oxidative stress. These functions might be dependent on each isozyme/isoform in each plant tissue.</text>
</comment>
<comment type="catalytic activity">
    <reaction>
        <text>2 a phenolic donor + H2O2 = 2 a phenolic radical donor + 2 H2O</text>
        <dbReference type="Rhea" id="RHEA:56136"/>
        <dbReference type="ChEBI" id="CHEBI:15377"/>
        <dbReference type="ChEBI" id="CHEBI:16240"/>
        <dbReference type="ChEBI" id="CHEBI:139520"/>
        <dbReference type="ChEBI" id="CHEBI:139521"/>
        <dbReference type="EC" id="1.11.1.7"/>
    </reaction>
</comment>
<comment type="cofactor">
    <cofactor evidence="2 3">
        <name>heme b</name>
        <dbReference type="ChEBI" id="CHEBI:60344"/>
    </cofactor>
    <text evidence="2 3">Binds 1 heme b (iron(II)-protoporphyrin IX) group per subunit.</text>
</comment>
<comment type="cofactor">
    <cofactor evidence="2 3">
        <name>Ca(2+)</name>
        <dbReference type="ChEBI" id="CHEBI:29108"/>
    </cofactor>
    <text evidence="2 3">Binds 2 calcium ions per subunit.</text>
</comment>
<comment type="subcellular location">
    <subcellularLocation>
        <location evidence="1 3">Secreted</location>
    </subcellularLocation>
</comment>
<comment type="similarity">
    <text evidence="3">Belongs to the peroxidase family. Classical plant (class III) peroxidase subfamily.</text>
</comment>
<feature type="chain" id="PRO_0000363730" description="Peroxidase 3">
    <location>
        <begin position="1" status="less than"/>
        <end position="45" status="greater than"/>
    </location>
</feature>
<feature type="unsure residue" description="F or M">
    <location>
        <position position="2"/>
    </location>
</feature>
<feature type="unsure residue" description="I or L">
    <location>
        <position position="5"/>
    </location>
</feature>
<feature type="unsure residue" description="I or L">
    <location>
        <position position="8"/>
    </location>
</feature>
<feature type="unsure residue" description="K or Q">
    <location>
        <position position="9"/>
    </location>
</feature>
<feature type="unsure residue" description="I or L">
    <location>
        <position position="14"/>
    </location>
</feature>
<feature type="unsure residue" description="L or I">
    <location>
        <position position="15"/>
    </location>
</feature>
<feature type="unsure residue" description="K or Q">
    <location>
        <position position="23"/>
    </location>
</feature>
<feature type="unsure residue" description="M or F">
    <location>
        <position position="24"/>
    </location>
</feature>
<feature type="unsure residue" description="I or L">
    <location>
        <position position="27"/>
    </location>
</feature>
<feature type="unsure residue" description="L or I">
    <location>
        <position position="30"/>
    </location>
</feature>
<feature type="unsure residue" description="I or L">
    <location>
        <position position="37"/>
    </location>
</feature>
<feature type="unsure residue" description="F or M">
    <location>
        <position position="39"/>
    </location>
</feature>
<feature type="unsure residue" description="F or M">
    <location>
        <position position="44"/>
    </location>
</feature>
<feature type="unsure residue" description="K or Q">
    <location>
        <position position="45"/>
    </location>
</feature>
<feature type="non-consecutive residues" evidence="4">
    <location>
        <begin position="9"/>
        <end position="10"/>
    </location>
</feature>
<feature type="non-consecutive residues" evidence="4">
    <location>
        <begin position="23"/>
        <end position="24"/>
    </location>
</feature>
<feature type="non-consecutive residues" evidence="4">
    <location>
        <begin position="38"/>
        <end position="39"/>
    </location>
</feature>
<feature type="non-terminal residue">
    <location>
        <position position="1"/>
    </location>
</feature>
<feature type="non-terminal residue">
    <location>
        <position position="45"/>
    </location>
</feature>
<accession>P86001</accession>